<gene>
    <name evidence="1" type="primary">murB</name>
    <name type="ordered locus">BH11220</name>
</gene>
<evidence type="ECO:0000255" key="1">
    <source>
        <dbReference type="HAMAP-Rule" id="MF_00037"/>
    </source>
</evidence>
<evidence type="ECO:0000305" key="2"/>
<dbReference type="EC" id="1.3.1.98" evidence="1"/>
<dbReference type="EMBL" id="BX897699">
    <property type="protein sequence ID" value="CAF27907.1"/>
    <property type="status" value="ALT_INIT"/>
    <property type="molecule type" value="Genomic_DNA"/>
</dbReference>
<dbReference type="RefSeq" id="WP_038525224.1">
    <property type="nucleotide sequence ID" value="NC_005956.1"/>
</dbReference>
<dbReference type="SMR" id="Q6G2Q7"/>
<dbReference type="PaxDb" id="283166-BH11220"/>
<dbReference type="EnsemblBacteria" id="CAF27907">
    <property type="protein sequence ID" value="CAF27907"/>
    <property type="gene ID" value="BH11220"/>
</dbReference>
<dbReference type="GeneID" id="92985736"/>
<dbReference type="KEGG" id="bhe:BH11220"/>
<dbReference type="eggNOG" id="COG0812">
    <property type="taxonomic scope" value="Bacteria"/>
</dbReference>
<dbReference type="OrthoDB" id="9804753at2"/>
<dbReference type="UniPathway" id="UPA00219"/>
<dbReference type="Proteomes" id="UP000000421">
    <property type="component" value="Chromosome"/>
</dbReference>
<dbReference type="GO" id="GO:0005829">
    <property type="term" value="C:cytosol"/>
    <property type="evidence" value="ECO:0007669"/>
    <property type="project" value="TreeGrafter"/>
</dbReference>
<dbReference type="GO" id="GO:0071949">
    <property type="term" value="F:FAD binding"/>
    <property type="evidence" value="ECO:0007669"/>
    <property type="project" value="InterPro"/>
</dbReference>
<dbReference type="GO" id="GO:0008762">
    <property type="term" value="F:UDP-N-acetylmuramate dehydrogenase activity"/>
    <property type="evidence" value="ECO:0007669"/>
    <property type="project" value="UniProtKB-UniRule"/>
</dbReference>
<dbReference type="GO" id="GO:0051301">
    <property type="term" value="P:cell division"/>
    <property type="evidence" value="ECO:0007669"/>
    <property type="project" value="UniProtKB-KW"/>
</dbReference>
<dbReference type="GO" id="GO:0071555">
    <property type="term" value="P:cell wall organization"/>
    <property type="evidence" value="ECO:0007669"/>
    <property type="project" value="UniProtKB-KW"/>
</dbReference>
<dbReference type="GO" id="GO:0009252">
    <property type="term" value="P:peptidoglycan biosynthetic process"/>
    <property type="evidence" value="ECO:0007669"/>
    <property type="project" value="UniProtKB-UniRule"/>
</dbReference>
<dbReference type="GO" id="GO:0008360">
    <property type="term" value="P:regulation of cell shape"/>
    <property type="evidence" value="ECO:0007669"/>
    <property type="project" value="UniProtKB-KW"/>
</dbReference>
<dbReference type="Gene3D" id="3.30.465.10">
    <property type="match status" value="1"/>
</dbReference>
<dbReference type="Gene3D" id="3.90.78.10">
    <property type="entry name" value="UDP-N-acetylenolpyruvoylglucosamine reductase, C-terminal domain"/>
    <property type="match status" value="1"/>
</dbReference>
<dbReference type="Gene3D" id="3.30.43.10">
    <property type="entry name" value="Uridine Diphospho-n-acetylenolpyruvylglucosamine Reductase, domain 2"/>
    <property type="match status" value="1"/>
</dbReference>
<dbReference type="HAMAP" id="MF_00037">
    <property type="entry name" value="MurB"/>
    <property type="match status" value="1"/>
</dbReference>
<dbReference type="InterPro" id="IPR016166">
    <property type="entry name" value="FAD-bd_PCMH"/>
</dbReference>
<dbReference type="InterPro" id="IPR036318">
    <property type="entry name" value="FAD-bd_PCMH-like_sf"/>
</dbReference>
<dbReference type="InterPro" id="IPR016167">
    <property type="entry name" value="FAD-bd_PCMH_sub1"/>
</dbReference>
<dbReference type="InterPro" id="IPR016169">
    <property type="entry name" value="FAD-bd_PCMH_sub2"/>
</dbReference>
<dbReference type="InterPro" id="IPR003170">
    <property type="entry name" value="MurB"/>
</dbReference>
<dbReference type="InterPro" id="IPR011601">
    <property type="entry name" value="MurB_C"/>
</dbReference>
<dbReference type="InterPro" id="IPR036635">
    <property type="entry name" value="MurB_C_sf"/>
</dbReference>
<dbReference type="InterPro" id="IPR006094">
    <property type="entry name" value="Oxid_FAD_bind_N"/>
</dbReference>
<dbReference type="NCBIfam" id="NF010480">
    <property type="entry name" value="PRK13905.1"/>
    <property type="match status" value="1"/>
</dbReference>
<dbReference type="PANTHER" id="PTHR21071">
    <property type="entry name" value="UDP-N-ACETYLENOLPYRUVOYLGLUCOSAMINE REDUCTASE"/>
    <property type="match status" value="1"/>
</dbReference>
<dbReference type="PANTHER" id="PTHR21071:SF4">
    <property type="entry name" value="UDP-N-ACETYLENOLPYRUVOYLGLUCOSAMINE REDUCTASE"/>
    <property type="match status" value="1"/>
</dbReference>
<dbReference type="Pfam" id="PF01565">
    <property type="entry name" value="FAD_binding_4"/>
    <property type="match status" value="1"/>
</dbReference>
<dbReference type="Pfam" id="PF02873">
    <property type="entry name" value="MurB_C"/>
    <property type="match status" value="1"/>
</dbReference>
<dbReference type="SUPFAM" id="SSF56176">
    <property type="entry name" value="FAD-binding/transporter-associated domain-like"/>
    <property type="match status" value="1"/>
</dbReference>
<dbReference type="SUPFAM" id="SSF56194">
    <property type="entry name" value="Uridine diphospho-N-Acetylenolpyruvylglucosamine reductase, MurB, C-terminal domain"/>
    <property type="match status" value="1"/>
</dbReference>
<dbReference type="PROSITE" id="PS51387">
    <property type="entry name" value="FAD_PCMH"/>
    <property type="match status" value="1"/>
</dbReference>
<proteinExistence type="inferred from homology"/>
<feature type="chain" id="PRO_0000224665" description="UDP-N-acetylenolpyruvoylglucosamine reductase">
    <location>
        <begin position="1"/>
        <end position="325"/>
    </location>
</feature>
<feature type="domain" description="FAD-binding PCMH-type" evidence="1">
    <location>
        <begin position="40"/>
        <end position="221"/>
    </location>
</feature>
<feature type="active site" evidence="1">
    <location>
        <position position="186"/>
    </location>
</feature>
<feature type="active site" description="Proton donor" evidence="1">
    <location>
        <position position="235"/>
    </location>
</feature>
<feature type="active site" evidence="1">
    <location>
        <position position="305"/>
    </location>
</feature>
<sequence>MINFQLIDGEALLARLQPTLGGIKGKLTPNMDMQKVTWFRTGGLAELFYQPADEVDLAFFLQNLPESIPVTIVGIGSNLLVRDGGIPGVVIRLSAKGFGQVQQVSPTGFLVGAATADKHLAAAALEAEIAGFHFYHGIPGGLGGALKMNAGANGVETAARVVEVYALDRRGQCHTLSLADMHYSYRHCAVPEDFIFTAALLEGKPGNKGDIRAAMDEVALHRESVQPVREKTGGSTFRNPKDISAWRVIDEAGCRGLQIGGAQMSEMHCNFMINTGQATAYDLEALGETVRARVFAYSSHLLQWEIQRIGQFEQGRIVSSFDPFN</sequence>
<protein>
    <recommendedName>
        <fullName evidence="1">UDP-N-acetylenolpyruvoylglucosamine reductase</fullName>
        <ecNumber evidence="1">1.3.1.98</ecNumber>
    </recommendedName>
    <alternativeName>
        <fullName evidence="1">UDP-N-acetylmuramate dehydrogenase</fullName>
    </alternativeName>
</protein>
<accession>Q6G2Q7</accession>
<reference key="1">
    <citation type="journal article" date="2004" name="Proc. Natl. Acad. Sci. U.S.A.">
        <title>The louse-borne human pathogen Bartonella quintana is a genomic derivative of the zoonotic agent Bartonella henselae.</title>
        <authorList>
            <person name="Alsmark U.C.M."/>
            <person name="Frank A.C."/>
            <person name="Karlberg E.O."/>
            <person name="Legault B.-A."/>
            <person name="Ardell D.H."/>
            <person name="Canbaeck B."/>
            <person name="Eriksson A.-S."/>
            <person name="Naeslund A.K."/>
            <person name="Handley S.A."/>
            <person name="Huvet M."/>
            <person name="La Scola B."/>
            <person name="Holmberg M."/>
            <person name="Andersson S.G.E."/>
        </authorList>
    </citation>
    <scope>NUCLEOTIDE SEQUENCE [LARGE SCALE GENOMIC DNA]</scope>
    <source>
        <strain>ATCC 49882 / DSM 28221 / CCUG 30454 / Houston 1</strain>
    </source>
</reference>
<comment type="function">
    <text evidence="1">Cell wall formation.</text>
</comment>
<comment type="catalytic activity">
    <reaction evidence="1">
        <text>UDP-N-acetyl-alpha-D-muramate + NADP(+) = UDP-N-acetyl-3-O-(1-carboxyvinyl)-alpha-D-glucosamine + NADPH + H(+)</text>
        <dbReference type="Rhea" id="RHEA:12248"/>
        <dbReference type="ChEBI" id="CHEBI:15378"/>
        <dbReference type="ChEBI" id="CHEBI:57783"/>
        <dbReference type="ChEBI" id="CHEBI:58349"/>
        <dbReference type="ChEBI" id="CHEBI:68483"/>
        <dbReference type="ChEBI" id="CHEBI:70757"/>
        <dbReference type="EC" id="1.3.1.98"/>
    </reaction>
</comment>
<comment type="cofactor">
    <cofactor evidence="1">
        <name>FAD</name>
        <dbReference type="ChEBI" id="CHEBI:57692"/>
    </cofactor>
</comment>
<comment type="pathway">
    <text evidence="1">Cell wall biogenesis; peptidoglycan biosynthesis.</text>
</comment>
<comment type="subcellular location">
    <subcellularLocation>
        <location evidence="1">Cytoplasm</location>
    </subcellularLocation>
</comment>
<comment type="similarity">
    <text evidence="1">Belongs to the MurB family.</text>
</comment>
<comment type="sequence caution" evidence="2">
    <conflict type="erroneous initiation">
        <sequence resource="EMBL-CDS" id="CAF27907"/>
    </conflict>
</comment>
<name>MURB_BARHE</name>
<keyword id="KW-0131">Cell cycle</keyword>
<keyword id="KW-0132">Cell division</keyword>
<keyword id="KW-0133">Cell shape</keyword>
<keyword id="KW-0961">Cell wall biogenesis/degradation</keyword>
<keyword id="KW-0963">Cytoplasm</keyword>
<keyword id="KW-0274">FAD</keyword>
<keyword id="KW-0285">Flavoprotein</keyword>
<keyword id="KW-0521">NADP</keyword>
<keyword id="KW-0560">Oxidoreductase</keyword>
<keyword id="KW-0573">Peptidoglycan synthesis</keyword>
<organism>
    <name type="scientific">Bartonella henselae (strain ATCC 49882 / DSM 28221 / CCUG 30454 / Houston 1)</name>
    <name type="common">Rochalimaea henselae</name>
    <dbReference type="NCBI Taxonomy" id="283166"/>
    <lineage>
        <taxon>Bacteria</taxon>
        <taxon>Pseudomonadati</taxon>
        <taxon>Pseudomonadota</taxon>
        <taxon>Alphaproteobacteria</taxon>
        <taxon>Hyphomicrobiales</taxon>
        <taxon>Bartonellaceae</taxon>
        <taxon>Bartonella</taxon>
    </lineage>
</organism>